<evidence type="ECO:0000250" key="1"/>
<evidence type="ECO:0000305" key="2"/>
<name>TRMD_LISMO</name>
<protein>
    <recommendedName>
        <fullName>tRNA (guanine-N(1)-)-methyltransferase</fullName>
        <ecNumber>2.1.1.228</ecNumber>
    </recommendedName>
    <alternativeName>
        <fullName>M1G-methyltransferase</fullName>
    </alternativeName>
    <alternativeName>
        <fullName>tRNA [GM37] methyltransferase</fullName>
    </alternativeName>
</protein>
<keyword id="KW-0963">Cytoplasm</keyword>
<keyword id="KW-0489">Methyltransferase</keyword>
<keyword id="KW-1185">Reference proteome</keyword>
<keyword id="KW-0949">S-adenosyl-L-methionine</keyword>
<keyword id="KW-0808">Transferase</keyword>
<keyword id="KW-0819">tRNA processing</keyword>
<reference key="1">
    <citation type="journal article" date="2001" name="Science">
        <title>Comparative genomics of Listeria species.</title>
        <authorList>
            <person name="Glaser P."/>
            <person name="Frangeul L."/>
            <person name="Buchrieser C."/>
            <person name="Rusniok C."/>
            <person name="Amend A."/>
            <person name="Baquero F."/>
            <person name="Berche P."/>
            <person name="Bloecker H."/>
            <person name="Brandt P."/>
            <person name="Chakraborty T."/>
            <person name="Charbit A."/>
            <person name="Chetouani F."/>
            <person name="Couve E."/>
            <person name="de Daruvar A."/>
            <person name="Dehoux P."/>
            <person name="Domann E."/>
            <person name="Dominguez-Bernal G."/>
            <person name="Duchaud E."/>
            <person name="Durant L."/>
            <person name="Dussurget O."/>
            <person name="Entian K.-D."/>
            <person name="Fsihi H."/>
            <person name="Garcia-del Portillo F."/>
            <person name="Garrido P."/>
            <person name="Gautier L."/>
            <person name="Goebel W."/>
            <person name="Gomez-Lopez N."/>
            <person name="Hain T."/>
            <person name="Hauf J."/>
            <person name="Jackson D."/>
            <person name="Jones L.-M."/>
            <person name="Kaerst U."/>
            <person name="Kreft J."/>
            <person name="Kuhn M."/>
            <person name="Kunst F."/>
            <person name="Kurapkat G."/>
            <person name="Madueno E."/>
            <person name="Maitournam A."/>
            <person name="Mata Vicente J."/>
            <person name="Ng E."/>
            <person name="Nedjari H."/>
            <person name="Nordsiek G."/>
            <person name="Novella S."/>
            <person name="de Pablos B."/>
            <person name="Perez-Diaz J.-C."/>
            <person name="Purcell R."/>
            <person name="Remmel B."/>
            <person name="Rose M."/>
            <person name="Schlueter T."/>
            <person name="Simoes N."/>
            <person name="Tierrez A."/>
            <person name="Vazquez-Boland J.-A."/>
            <person name="Voss H."/>
            <person name="Wehland J."/>
            <person name="Cossart P."/>
        </authorList>
    </citation>
    <scope>NUCLEOTIDE SEQUENCE [LARGE SCALE GENOMIC DNA]</scope>
    <source>
        <strain>ATCC BAA-679 / EGD-e</strain>
    </source>
</reference>
<gene>
    <name type="primary">trmD</name>
    <name type="ordered locus">lmo1792</name>
</gene>
<comment type="function">
    <text evidence="1">Specifically methylates guanosine-37 in various tRNAs.</text>
</comment>
<comment type="catalytic activity">
    <reaction>
        <text>guanosine(37) in tRNA + S-adenosyl-L-methionine = N(1)-methylguanosine(37) in tRNA + S-adenosyl-L-homocysteine + H(+)</text>
        <dbReference type="Rhea" id="RHEA:36899"/>
        <dbReference type="Rhea" id="RHEA-COMP:10145"/>
        <dbReference type="Rhea" id="RHEA-COMP:10147"/>
        <dbReference type="ChEBI" id="CHEBI:15378"/>
        <dbReference type="ChEBI" id="CHEBI:57856"/>
        <dbReference type="ChEBI" id="CHEBI:59789"/>
        <dbReference type="ChEBI" id="CHEBI:73542"/>
        <dbReference type="ChEBI" id="CHEBI:74269"/>
        <dbReference type="EC" id="2.1.1.228"/>
    </reaction>
</comment>
<comment type="subunit">
    <text evidence="1">Homodimer.</text>
</comment>
<comment type="subcellular location">
    <subcellularLocation>
        <location evidence="2">Cytoplasm</location>
    </subcellularLocation>
</comment>
<comment type="similarity">
    <text evidence="2">Belongs to the RNA methyltransferase TrmD family.</text>
</comment>
<feature type="chain" id="PRO_0000060402" description="tRNA (guanine-N(1)-)-methyltransferase">
    <location>
        <begin position="1"/>
        <end position="245"/>
    </location>
</feature>
<feature type="binding site" evidence="1">
    <location>
        <position position="114"/>
    </location>
    <ligand>
        <name>S-adenosyl-L-methionine</name>
        <dbReference type="ChEBI" id="CHEBI:59789"/>
    </ligand>
</feature>
<feature type="binding site" evidence="1">
    <location>
        <begin position="134"/>
        <end position="139"/>
    </location>
    <ligand>
        <name>S-adenosyl-L-methionine</name>
        <dbReference type="ChEBI" id="CHEBI:59789"/>
    </ligand>
</feature>
<sequence>MKIDILSIFPDMFSGVTGNSIIKKAIENERVAVEVTDFREYAEGKHHIVDDYPYGGGAGMLLKAQPIFDAVQAVKEKQPETKPRVILMDPAGKRFNQKMAEEFAEEEHLVFICGHYEGYDERIREHLVTDEVSIGDYILTGGEIGAMIVMDSVIRLLPGVLGNKDSAVTDSFSTGLLEHPHYTRPADFRGMKVPDILLSGNHAWIEEWRDKESLKRTYERRPDLLKNYPLTDKQKTWLKEWSDSK</sequence>
<dbReference type="EC" id="2.1.1.228"/>
<dbReference type="EMBL" id="AL591981">
    <property type="protein sequence ID" value="CAC99870.1"/>
    <property type="molecule type" value="Genomic_DNA"/>
</dbReference>
<dbReference type="PIR" id="AH1298">
    <property type="entry name" value="AH1298"/>
</dbReference>
<dbReference type="RefSeq" id="NP_465317.1">
    <property type="nucleotide sequence ID" value="NC_003210.1"/>
</dbReference>
<dbReference type="RefSeq" id="WP_003724048.1">
    <property type="nucleotide sequence ID" value="NZ_CP149495.1"/>
</dbReference>
<dbReference type="SMR" id="Q8Y6A3"/>
<dbReference type="STRING" id="169963.gene:17594477"/>
<dbReference type="PaxDb" id="169963-lmo1792"/>
<dbReference type="EnsemblBacteria" id="CAC99870">
    <property type="protein sequence ID" value="CAC99870"/>
    <property type="gene ID" value="CAC99870"/>
</dbReference>
<dbReference type="GeneID" id="93239702"/>
<dbReference type="GeneID" id="985936"/>
<dbReference type="KEGG" id="lmo:lmo1792"/>
<dbReference type="PATRIC" id="fig|169963.11.peg.1836"/>
<dbReference type="eggNOG" id="COG0336">
    <property type="taxonomic scope" value="Bacteria"/>
</dbReference>
<dbReference type="HOGENOM" id="CLU_047363_0_1_9"/>
<dbReference type="OrthoDB" id="9807416at2"/>
<dbReference type="PhylomeDB" id="Q8Y6A3"/>
<dbReference type="BioCyc" id="LMON169963:LMO1792-MONOMER"/>
<dbReference type="Proteomes" id="UP000000817">
    <property type="component" value="Chromosome"/>
</dbReference>
<dbReference type="GO" id="GO:0005829">
    <property type="term" value="C:cytosol"/>
    <property type="evidence" value="ECO:0000318"/>
    <property type="project" value="GO_Central"/>
</dbReference>
<dbReference type="GO" id="GO:0052906">
    <property type="term" value="F:tRNA (guanine(37)-N1)-methyltransferase activity"/>
    <property type="evidence" value="ECO:0000318"/>
    <property type="project" value="GO_Central"/>
</dbReference>
<dbReference type="GO" id="GO:0002939">
    <property type="term" value="P:tRNA N1-guanine methylation"/>
    <property type="evidence" value="ECO:0000318"/>
    <property type="project" value="GO_Central"/>
</dbReference>
<dbReference type="CDD" id="cd18080">
    <property type="entry name" value="TrmD-like"/>
    <property type="match status" value="1"/>
</dbReference>
<dbReference type="FunFam" id="1.10.1270.20:FF:000001">
    <property type="entry name" value="tRNA (guanine-N(1)-)-methyltransferase"/>
    <property type="match status" value="1"/>
</dbReference>
<dbReference type="FunFam" id="3.40.1280.10:FF:000001">
    <property type="entry name" value="tRNA (guanine-N(1)-)-methyltransferase"/>
    <property type="match status" value="1"/>
</dbReference>
<dbReference type="Gene3D" id="3.40.1280.10">
    <property type="match status" value="1"/>
</dbReference>
<dbReference type="Gene3D" id="1.10.1270.20">
    <property type="entry name" value="tRNA(m1g37)methyltransferase, domain 2"/>
    <property type="match status" value="1"/>
</dbReference>
<dbReference type="HAMAP" id="MF_00605">
    <property type="entry name" value="TrmD"/>
    <property type="match status" value="1"/>
</dbReference>
<dbReference type="InterPro" id="IPR029028">
    <property type="entry name" value="Alpha/beta_knot_MTases"/>
</dbReference>
<dbReference type="InterPro" id="IPR023148">
    <property type="entry name" value="tRNA_m1G_MeTrfase_C_sf"/>
</dbReference>
<dbReference type="InterPro" id="IPR002649">
    <property type="entry name" value="tRNA_m1G_MeTrfase_TrmD"/>
</dbReference>
<dbReference type="InterPro" id="IPR029026">
    <property type="entry name" value="tRNA_m1G_MTases_N"/>
</dbReference>
<dbReference type="InterPro" id="IPR016009">
    <property type="entry name" value="tRNA_MeTrfase_TRMD/TRM10"/>
</dbReference>
<dbReference type="NCBIfam" id="NF000648">
    <property type="entry name" value="PRK00026.1"/>
    <property type="match status" value="1"/>
</dbReference>
<dbReference type="NCBIfam" id="TIGR00088">
    <property type="entry name" value="trmD"/>
    <property type="match status" value="1"/>
</dbReference>
<dbReference type="PANTHER" id="PTHR46417">
    <property type="entry name" value="TRNA (GUANINE-N(1)-)-METHYLTRANSFERASE"/>
    <property type="match status" value="1"/>
</dbReference>
<dbReference type="PANTHER" id="PTHR46417:SF1">
    <property type="entry name" value="TRNA (GUANINE-N(1)-)-METHYLTRANSFERASE"/>
    <property type="match status" value="1"/>
</dbReference>
<dbReference type="Pfam" id="PF01746">
    <property type="entry name" value="tRNA_m1G_MT"/>
    <property type="match status" value="1"/>
</dbReference>
<dbReference type="PIRSF" id="PIRSF000386">
    <property type="entry name" value="tRNA_mtase"/>
    <property type="match status" value="1"/>
</dbReference>
<dbReference type="SUPFAM" id="SSF75217">
    <property type="entry name" value="alpha/beta knot"/>
    <property type="match status" value="1"/>
</dbReference>
<proteinExistence type="inferred from homology"/>
<organism>
    <name type="scientific">Listeria monocytogenes serovar 1/2a (strain ATCC BAA-679 / EGD-e)</name>
    <dbReference type="NCBI Taxonomy" id="169963"/>
    <lineage>
        <taxon>Bacteria</taxon>
        <taxon>Bacillati</taxon>
        <taxon>Bacillota</taxon>
        <taxon>Bacilli</taxon>
        <taxon>Bacillales</taxon>
        <taxon>Listeriaceae</taxon>
        <taxon>Listeria</taxon>
    </lineage>
</organism>
<accession>Q8Y6A3</accession>